<name>RS8_STRPD</name>
<sequence>MVMTDPIADFLTRIRNANQVKHEVLEVPASNIKKGIAEILKREGFVKNVEVIEDDKQGIIRVFLKYGKNGERVITNLKRISKPGLRVYAKRDDMPKVLNGLGIAIISTSEGLLTDKEARQKNVGGEVIAYVW</sequence>
<dbReference type="EMBL" id="CP000260">
    <property type="protein sequence ID" value="ABF33125.1"/>
    <property type="molecule type" value="Genomic_DNA"/>
</dbReference>
<dbReference type="RefSeq" id="WP_002987748.1">
    <property type="nucleotide sequence ID" value="NZ_CVUH01000001.1"/>
</dbReference>
<dbReference type="SMR" id="Q1JJ48"/>
<dbReference type="GeneID" id="69900040"/>
<dbReference type="KEGG" id="sph:MGAS10270_Spy0060"/>
<dbReference type="HOGENOM" id="CLU_098428_0_2_9"/>
<dbReference type="Proteomes" id="UP000002436">
    <property type="component" value="Chromosome"/>
</dbReference>
<dbReference type="GO" id="GO:1990904">
    <property type="term" value="C:ribonucleoprotein complex"/>
    <property type="evidence" value="ECO:0007669"/>
    <property type="project" value="UniProtKB-KW"/>
</dbReference>
<dbReference type="GO" id="GO:0005840">
    <property type="term" value="C:ribosome"/>
    <property type="evidence" value="ECO:0007669"/>
    <property type="project" value="UniProtKB-KW"/>
</dbReference>
<dbReference type="GO" id="GO:0019843">
    <property type="term" value="F:rRNA binding"/>
    <property type="evidence" value="ECO:0007669"/>
    <property type="project" value="UniProtKB-UniRule"/>
</dbReference>
<dbReference type="GO" id="GO:0003735">
    <property type="term" value="F:structural constituent of ribosome"/>
    <property type="evidence" value="ECO:0007669"/>
    <property type="project" value="InterPro"/>
</dbReference>
<dbReference type="GO" id="GO:0006412">
    <property type="term" value="P:translation"/>
    <property type="evidence" value="ECO:0007669"/>
    <property type="project" value="UniProtKB-UniRule"/>
</dbReference>
<dbReference type="FunFam" id="3.30.1370.30:FF:000002">
    <property type="entry name" value="30S ribosomal protein S8"/>
    <property type="match status" value="1"/>
</dbReference>
<dbReference type="FunFam" id="3.30.1490.10:FF:000001">
    <property type="entry name" value="30S ribosomal protein S8"/>
    <property type="match status" value="1"/>
</dbReference>
<dbReference type="Gene3D" id="3.30.1370.30">
    <property type="match status" value="1"/>
</dbReference>
<dbReference type="Gene3D" id="3.30.1490.10">
    <property type="match status" value="1"/>
</dbReference>
<dbReference type="HAMAP" id="MF_01302_B">
    <property type="entry name" value="Ribosomal_uS8_B"/>
    <property type="match status" value="1"/>
</dbReference>
<dbReference type="InterPro" id="IPR000630">
    <property type="entry name" value="Ribosomal_uS8"/>
</dbReference>
<dbReference type="InterPro" id="IPR047863">
    <property type="entry name" value="Ribosomal_uS8_CS"/>
</dbReference>
<dbReference type="InterPro" id="IPR035987">
    <property type="entry name" value="Ribosomal_uS8_sf"/>
</dbReference>
<dbReference type="NCBIfam" id="NF001109">
    <property type="entry name" value="PRK00136.1"/>
    <property type="match status" value="1"/>
</dbReference>
<dbReference type="PANTHER" id="PTHR11758">
    <property type="entry name" value="40S RIBOSOMAL PROTEIN S15A"/>
    <property type="match status" value="1"/>
</dbReference>
<dbReference type="Pfam" id="PF00410">
    <property type="entry name" value="Ribosomal_S8"/>
    <property type="match status" value="1"/>
</dbReference>
<dbReference type="SUPFAM" id="SSF56047">
    <property type="entry name" value="Ribosomal protein S8"/>
    <property type="match status" value="1"/>
</dbReference>
<dbReference type="PROSITE" id="PS00053">
    <property type="entry name" value="RIBOSOMAL_S8"/>
    <property type="match status" value="1"/>
</dbReference>
<proteinExistence type="inferred from homology"/>
<protein>
    <recommendedName>
        <fullName evidence="1">Small ribosomal subunit protein uS8</fullName>
    </recommendedName>
    <alternativeName>
        <fullName evidence="2">30S ribosomal protein S8</fullName>
    </alternativeName>
</protein>
<gene>
    <name evidence="1" type="primary">rpsH</name>
    <name type="ordered locus">MGAS10270_Spy0060</name>
</gene>
<feature type="chain" id="PRO_0000290943" description="Small ribosomal subunit protein uS8">
    <location>
        <begin position="1"/>
        <end position="132"/>
    </location>
</feature>
<organism>
    <name type="scientific">Streptococcus pyogenes serotype M2 (strain MGAS10270)</name>
    <dbReference type="NCBI Taxonomy" id="370552"/>
    <lineage>
        <taxon>Bacteria</taxon>
        <taxon>Bacillati</taxon>
        <taxon>Bacillota</taxon>
        <taxon>Bacilli</taxon>
        <taxon>Lactobacillales</taxon>
        <taxon>Streptococcaceae</taxon>
        <taxon>Streptococcus</taxon>
    </lineage>
</organism>
<accession>Q1JJ48</accession>
<reference key="1">
    <citation type="journal article" date="2006" name="Proc. Natl. Acad. Sci. U.S.A.">
        <title>Molecular genetic anatomy of inter- and intraserotype variation in the human bacterial pathogen group A Streptococcus.</title>
        <authorList>
            <person name="Beres S.B."/>
            <person name="Richter E.W."/>
            <person name="Nagiec M.J."/>
            <person name="Sumby P."/>
            <person name="Porcella S.F."/>
            <person name="DeLeo F.R."/>
            <person name="Musser J.M."/>
        </authorList>
    </citation>
    <scope>NUCLEOTIDE SEQUENCE [LARGE SCALE GENOMIC DNA]</scope>
    <source>
        <strain>MGAS10270</strain>
    </source>
</reference>
<evidence type="ECO:0000255" key="1">
    <source>
        <dbReference type="HAMAP-Rule" id="MF_01302"/>
    </source>
</evidence>
<evidence type="ECO:0000305" key="2"/>
<keyword id="KW-0687">Ribonucleoprotein</keyword>
<keyword id="KW-0689">Ribosomal protein</keyword>
<keyword id="KW-0694">RNA-binding</keyword>
<keyword id="KW-0699">rRNA-binding</keyword>
<comment type="function">
    <text evidence="1">One of the primary rRNA binding proteins, it binds directly to 16S rRNA central domain where it helps coordinate assembly of the platform of the 30S subunit.</text>
</comment>
<comment type="subunit">
    <text evidence="1">Part of the 30S ribosomal subunit. Contacts proteins S5 and S12.</text>
</comment>
<comment type="similarity">
    <text evidence="1">Belongs to the universal ribosomal protein uS8 family.</text>
</comment>